<reference key="1">
    <citation type="submission" date="2008-01" db="EMBL/GenBank/DDBJ databases">
        <title>Complete sequence of Shewanella halifaxensis HAW-EB4.</title>
        <authorList>
            <consortium name="US DOE Joint Genome Institute"/>
            <person name="Copeland A."/>
            <person name="Lucas S."/>
            <person name="Lapidus A."/>
            <person name="Glavina del Rio T."/>
            <person name="Dalin E."/>
            <person name="Tice H."/>
            <person name="Bruce D."/>
            <person name="Goodwin L."/>
            <person name="Pitluck S."/>
            <person name="Sims D."/>
            <person name="Brettin T."/>
            <person name="Detter J.C."/>
            <person name="Han C."/>
            <person name="Kuske C.R."/>
            <person name="Schmutz J."/>
            <person name="Larimer F."/>
            <person name="Land M."/>
            <person name="Hauser L."/>
            <person name="Kyrpides N."/>
            <person name="Kim E."/>
            <person name="Zhao J.-S."/>
            <person name="Richardson P."/>
        </authorList>
    </citation>
    <scope>NUCLEOTIDE SEQUENCE [LARGE SCALE GENOMIC DNA]</scope>
    <source>
        <strain>HAW-EB4</strain>
    </source>
</reference>
<keyword id="KW-0997">Cell inner membrane</keyword>
<keyword id="KW-1003">Cell membrane</keyword>
<keyword id="KW-0963">Cytoplasm</keyword>
<keyword id="KW-0472">Membrane</keyword>
<evidence type="ECO:0000255" key="1">
    <source>
        <dbReference type="HAMAP-Rule" id="MF_00695"/>
    </source>
</evidence>
<proteinExistence type="inferred from homology"/>
<gene>
    <name evidence="1" type="primary">hflD</name>
    <name type="ordered locus">Shal_1714</name>
</gene>
<sequence length="205" mass="22917">MSDQLFERTMAFAGILQAVAQVQYIARHGDSDKDALAASLQSVLVTNPETTSDVYADKVALRKGYELIVSQLGDAKQKDVEVTRYLVGILALERKLTRSSNAMGMLSERINQIHRQLSHFEITDEQVIANFAGIYSDIISELGPKLQISGNPEFLKRTQTQQKIRALLLSAMRSAVLWRQLGGKRRHLVFARKTIVDTAMKSLTL</sequence>
<name>HFLD_SHEHH</name>
<feature type="chain" id="PRO_1000083181" description="High frequency lysogenization protein HflD homolog">
    <location>
        <begin position="1"/>
        <end position="205"/>
    </location>
</feature>
<protein>
    <recommendedName>
        <fullName evidence="1">High frequency lysogenization protein HflD homolog</fullName>
    </recommendedName>
</protein>
<organism>
    <name type="scientific">Shewanella halifaxensis (strain HAW-EB4)</name>
    <dbReference type="NCBI Taxonomy" id="458817"/>
    <lineage>
        <taxon>Bacteria</taxon>
        <taxon>Pseudomonadati</taxon>
        <taxon>Pseudomonadota</taxon>
        <taxon>Gammaproteobacteria</taxon>
        <taxon>Alteromonadales</taxon>
        <taxon>Shewanellaceae</taxon>
        <taxon>Shewanella</taxon>
    </lineage>
</organism>
<dbReference type="EMBL" id="CP000931">
    <property type="protein sequence ID" value="ABZ76280.1"/>
    <property type="molecule type" value="Genomic_DNA"/>
</dbReference>
<dbReference type="RefSeq" id="WP_012276817.1">
    <property type="nucleotide sequence ID" value="NC_010334.1"/>
</dbReference>
<dbReference type="SMR" id="B0TQ01"/>
<dbReference type="STRING" id="458817.Shal_1714"/>
<dbReference type="KEGG" id="shl:Shal_1714"/>
<dbReference type="eggNOG" id="COG2915">
    <property type="taxonomic scope" value="Bacteria"/>
</dbReference>
<dbReference type="HOGENOM" id="CLU_098920_0_0_6"/>
<dbReference type="OrthoDB" id="9788031at2"/>
<dbReference type="Proteomes" id="UP000001317">
    <property type="component" value="Chromosome"/>
</dbReference>
<dbReference type="GO" id="GO:0005737">
    <property type="term" value="C:cytoplasm"/>
    <property type="evidence" value="ECO:0007669"/>
    <property type="project" value="UniProtKB-SubCell"/>
</dbReference>
<dbReference type="GO" id="GO:0005886">
    <property type="term" value="C:plasma membrane"/>
    <property type="evidence" value="ECO:0007669"/>
    <property type="project" value="UniProtKB-SubCell"/>
</dbReference>
<dbReference type="Gene3D" id="1.10.3890.10">
    <property type="entry name" value="HflD-like"/>
    <property type="match status" value="1"/>
</dbReference>
<dbReference type="HAMAP" id="MF_00695">
    <property type="entry name" value="HflD_protein"/>
    <property type="match status" value="1"/>
</dbReference>
<dbReference type="InterPro" id="IPR007451">
    <property type="entry name" value="HflD"/>
</dbReference>
<dbReference type="InterPro" id="IPR035932">
    <property type="entry name" value="HflD-like_sf"/>
</dbReference>
<dbReference type="NCBIfam" id="NF001246">
    <property type="entry name" value="PRK00218.1-2"/>
    <property type="match status" value="1"/>
</dbReference>
<dbReference type="NCBIfam" id="NF001248">
    <property type="entry name" value="PRK00218.1-4"/>
    <property type="match status" value="1"/>
</dbReference>
<dbReference type="PANTHER" id="PTHR38100">
    <property type="entry name" value="HIGH FREQUENCY LYSOGENIZATION PROTEIN HFLD"/>
    <property type="match status" value="1"/>
</dbReference>
<dbReference type="PANTHER" id="PTHR38100:SF1">
    <property type="entry name" value="HIGH FREQUENCY LYSOGENIZATION PROTEIN HFLD"/>
    <property type="match status" value="1"/>
</dbReference>
<dbReference type="Pfam" id="PF04356">
    <property type="entry name" value="DUF489"/>
    <property type="match status" value="1"/>
</dbReference>
<dbReference type="SUPFAM" id="SSF101322">
    <property type="entry name" value="YcfC-like"/>
    <property type="match status" value="1"/>
</dbReference>
<accession>B0TQ01</accession>
<comment type="subcellular location">
    <subcellularLocation>
        <location>Cytoplasm</location>
    </subcellularLocation>
    <subcellularLocation>
        <location evidence="1">Cell inner membrane</location>
        <topology evidence="1">Peripheral membrane protein</topology>
        <orientation evidence="1">Cytoplasmic side</orientation>
    </subcellularLocation>
</comment>
<comment type="similarity">
    <text evidence="1">Belongs to the HflD family.</text>
</comment>